<name>ASTC_ECO57</name>
<feature type="chain" id="PRO_0000120354" description="Succinylornithine transaminase">
    <location>
        <begin position="1"/>
        <end position="406"/>
    </location>
</feature>
<feature type="modified residue" description="N6-(pyridoxal phosphate)lysine" evidence="1">
    <location>
        <position position="252"/>
    </location>
</feature>
<accession>Q8X598</accession>
<protein>
    <recommendedName>
        <fullName evidence="1">Succinylornithine transaminase</fullName>
        <shortName>SOAT</shortName>
        <ecNumber evidence="1">2.6.1.81</ecNumber>
    </recommendedName>
    <alternativeName>
        <fullName evidence="1">Succinylornithine aminotransferase</fullName>
    </alternativeName>
</protein>
<gene>
    <name evidence="1" type="primary">astC</name>
    <name evidence="1" type="synonym">argM</name>
    <name type="ordered locus">Z2780</name>
    <name type="ordered locus">ECs2454</name>
</gene>
<comment type="function">
    <text evidence="1">Catalyzes the transamination of N(2)-succinylornithine and alpha-ketoglutarate into N(2)-succinylglutamate semialdehyde and glutamate. Can also act as an acetylornithine aminotransferase.</text>
</comment>
<comment type="catalytic activity">
    <reaction evidence="1">
        <text>N(2)-succinyl-L-ornithine + 2-oxoglutarate = N-succinyl-L-glutamate 5-semialdehyde + L-glutamate</text>
        <dbReference type="Rhea" id="RHEA:16953"/>
        <dbReference type="ChEBI" id="CHEBI:16810"/>
        <dbReference type="ChEBI" id="CHEBI:29985"/>
        <dbReference type="ChEBI" id="CHEBI:58514"/>
        <dbReference type="ChEBI" id="CHEBI:58520"/>
        <dbReference type="EC" id="2.6.1.81"/>
    </reaction>
</comment>
<comment type="cofactor">
    <cofactor evidence="1">
        <name>pyridoxal 5'-phosphate</name>
        <dbReference type="ChEBI" id="CHEBI:597326"/>
    </cofactor>
</comment>
<comment type="pathway">
    <text evidence="1">Amino-acid degradation; L-arginine degradation via AST pathway; L-glutamate and succinate from L-arginine: step 3/5.</text>
</comment>
<comment type="similarity">
    <text evidence="1">Belongs to the class-III pyridoxal-phosphate-dependent aminotransferase family. AstC subfamily.</text>
</comment>
<proteinExistence type="inferred from homology"/>
<sequence length="406" mass="43680">MSQPITRENFDEWMIPVYAPAPFIPVRGEGSRLWDQQGKEYIDFAGGIAVNALGHAHPELREALNEQASKFWHTGNGYTNESVLRLAKKLIDATFADRVFFCNSGAEANEAALKLARKFAHDRYGSHKSGIVAFKNAFHGRTLFTVSAGGQPAYSQDFAPLPPDIRHAAYNDINSASALIDDSTCAVIVEPIQGEGGVVPASNAFLQGLRELCDRHNALLIFDEVQTGVGRTGELYAYMHYGVTPDLLTTAKALGGGFPVGALLATEECASVMTVGTHGTTYGGNPLASAVAGKVLELINTPEMLNGVKQRHDWFVERLNIINHRYGLFNEVRGLGLLIGCVLNADYAGQAKQISQEAAKAGVMVLIAGGNVVRFAPALNVSEEEVTTGLDRFAVACEHFVSRGSS</sequence>
<evidence type="ECO:0000255" key="1">
    <source>
        <dbReference type="HAMAP-Rule" id="MF_01173"/>
    </source>
</evidence>
<organism>
    <name type="scientific">Escherichia coli O157:H7</name>
    <dbReference type="NCBI Taxonomy" id="83334"/>
    <lineage>
        <taxon>Bacteria</taxon>
        <taxon>Pseudomonadati</taxon>
        <taxon>Pseudomonadota</taxon>
        <taxon>Gammaproteobacteria</taxon>
        <taxon>Enterobacterales</taxon>
        <taxon>Enterobacteriaceae</taxon>
        <taxon>Escherichia</taxon>
    </lineage>
</organism>
<reference key="1">
    <citation type="journal article" date="2001" name="Nature">
        <title>Genome sequence of enterohaemorrhagic Escherichia coli O157:H7.</title>
        <authorList>
            <person name="Perna N.T."/>
            <person name="Plunkett G. III"/>
            <person name="Burland V."/>
            <person name="Mau B."/>
            <person name="Glasner J.D."/>
            <person name="Rose D.J."/>
            <person name="Mayhew G.F."/>
            <person name="Evans P.S."/>
            <person name="Gregor J."/>
            <person name="Kirkpatrick H.A."/>
            <person name="Posfai G."/>
            <person name="Hackett J."/>
            <person name="Klink S."/>
            <person name="Boutin A."/>
            <person name="Shao Y."/>
            <person name="Miller L."/>
            <person name="Grotbeck E.J."/>
            <person name="Davis N.W."/>
            <person name="Lim A."/>
            <person name="Dimalanta E.T."/>
            <person name="Potamousis K."/>
            <person name="Apodaca J."/>
            <person name="Anantharaman T.S."/>
            <person name="Lin J."/>
            <person name="Yen G."/>
            <person name="Schwartz D.C."/>
            <person name="Welch R.A."/>
            <person name="Blattner F.R."/>
        </authorList>
    </citation>
    <scope>NUCLEOTIDE SEQUENCE [LARGE SCALE GENOMIC DNA]</scope>
    <source>
        <strain>O157:H7 / EDL933 / ATCC 700927 / EHEC</strain>
    </source>
</reference>
<reference key="2">
    <citation type="journal article" date="2001" name="DNA Res.">
        <title>Complete genome sequence of enterohemorrhagic Escherichia coli O157:H7 and genomic comparison with a laboratory strain K-12.</title>
        <authorList>
            <person name="Hayashi T."/>
            <person name="Makino K."/>
            <person name="Ohnishi M."/>
            <person name="Kurokawa K."/>
            <person name="Ishii K."/>
            <person name="Yokoyama K."/>
            <person name="Han C.-G."/>
            <person name="Ohtsubo E."/>
            <person name="Nakayama K."/>
            <person name="Murata T."/>
            <person name="Tanaka M."/>
            <person name="Tobe T."/>
            <person name="Iida T."/>
            <person name="Takami H."/>
            <person name="Honda T."/>
            <person name="Sasakawa C."/>
            <person name="Ogasawara N."/>
            <person name="Yasunaga T."/>
            <person name="Kuhara S."/>
            <person name="Shiba T."/>
            <person name="Hattori M."/>
            <person name="Shinagawa H."/>
        </authorList>
    </citation>
    <scope>NUCLEOTIDE SEQUENCE [LARGE SCALE GENOMIC DNA]</scope>
    <source>
        <strain>O157:H7 / Sakai / RIMD 0509952 / EHEC</strain>
    </source>
</reference>
<keyword id="KW-0032">Aminotransferase</keyword>
<keyword id="KW-0056">Arginine metabolism</keyword>
<keyword id="KW-0663">Pyridoxal phosphate</keyword>
<keyword id="KW-1185">Reference proteome</keyword>
<keyword id="KW-0808">Transferase</keyword>
<dbReference type="EC" id="2.6.1.81" evidence="1"/>
<dbReference type="EMBL" id="AE005174">
    <property type="protein sequence ID" value="AAG56734.1"/>
    <property type="molecule type" value="Genomic_DNA"/>
</dbReference>
<dbReference type="EMBL" id="BA000007">
    <property type="protein sequence ID" value="BAB35877.1"/>
    <property type="molecule type" value="Genomic_DNA"/>
</dbReference>
<dbReference type="PIR" id="B85784">
    <property type="entry name" value="B85784"/>
</dbReference>
<dbReference type="PIR" id="F90935">
    <property type="entry name" value="F90935"/>
</dbReference>
<dbReference type="RefSeq" id="NP_310481.1">
    <property type="nucleotide sequence ID" value="NC_002695.1"/>
</dbReference>
<dbReference type="RefSeq" id="WP_000082019.1">
    <property type="nucleotide sequence ID" value="NZ_VOAI01000007.1"/>
</dbReference>
<dbReference type="SMR" id="Q8X598"/>
<dbReference type="STRING" id="155864.Z2780"/>
<dbReference type="GeneID" id="917115"/>
<dbReference type="KEGG" id="ece:Z2780"/>
<dbReference type="KEGG" id="ecs:ECs_2454"/>
<dbReference type="PATRIC" id="fig|386585.9.peg.2568"/>
<dbReference type="eggNOG" id="COG4992">
    <property type="taxonomic scope" value="Bacteria"/>
</dbReference>
<dbReference type="HOGENOM" id="CLU_016922_10_1_6"/>
<dbReference type="OMA" id="RSAWDLC"/>
<dbReference type="UniPathway" id="UPA00185">
    <property type="reaction ID" value="UER00281"/>
</dbReference>
<dbReference type="Proteomes" id="UP000000558">
    <property type="component" value="Chromosome"/>
</dbReference>
<dbReference type="Proteomes" id="UP000002519">
    <property type="component" value="Chromosome"/>
</dbReference>
<dbReference type="GO" id="GO:0042802">
    <property type="term" value="F:identical protein binding"/>
    <property type="evidence" value="ECO:0007669"/>
    <property type="project" value="TreeGrafter"/>
</dbReference>
<dbReference type="GO" id="GO:0030170">
    <property type="term" value="F:pyridoxal phosphate binding"/>
    <property type="evidence" value="ECO:0007669"/>
    <property type="project" value="UniProtKB-UniRule"/>
</dbReference>
<dbReference type="GO" id="GO:0043825">
    <property type="term" value="F:succinylornithine transaminase activity"/>
    <property type="evidence" value="ECO:0007669"/>
    <property type="project" value="UniProtKB-EC"/>
</dbReference>
<dbReference type="GO" id="GO:1901607">
    <property type="term" value="P:alpha-amino acid biosynthetic process"/>
    <property type="evidence" value="ECO:0007669"/>
    <property type="project" value="UniProtKB-ARBA"/>
</dbReference>
<dbReference type="GO" id="GO:0019544">
    <property type="term" value="P:arginine catabolic process to glutamate"/>
    <property type="evidence" value="ECO:0007669"/>
    <property type="project" value="UniProtKB-UniRule"/>
</dbReference>
<dbReference type="GO" id="GO:0019545">
    <property type="term" value="P:arginine catabolic process to succinate"/>
    <property type="evidence" value="ECO:0007669"/>
    <property type="project" value="UniProtKB-UniRule"/>
</dbReference>
<dbReference type="GO" id="GO:0006593">
    <property type="term" value="P:ornithine catabolic process"/>
    <property type="evidence" value="ECO:0007669"/>
    <property type="project" value="InterPro"/>
</dbReference>
<dbReference type="CDD" id="cd00610">
    <property type="entry name" value="OAT_like"/>
    <property type="match status" value="1"/>
</dbReference>
<dbReference type="FunFam" id="3.40.640.10:FF:000004">
    <property type="entry name" value="Acetylornithine aminotransferase"/>
    <property type="match status" value="1"/>
</dbReference>
<dbReference type="FunFam" id="3.90.1150.10:FF:000009">
    <property type="entry name" value="Succinylornithine transaminase"/>
    <property type="match status" value="1"/>
</dbReference>
<dbReference type="Gene3D" id="3.90.1150.10">
    <property type="entry name" value="Aspartate Aminotransferase, domain 1"/>
    <property type="match status" value="1"/>
</dbReference>
<dbReference type="Gene3D" id="3.40.640.10">
    <property type="entry name" value="Type I PLP-dependent aspartate aminotransferase-like (Major domain)"/>
    <property type="match status" value="1"/>
</dbReference>
<dbReference type="HAMAP" id="MF_01107">
    <property type="entry name" value="ArgD_aminotrans_3"/>
    <property type="match status" value="1"/>
</dbReference>
<dbReference type="HAMAP" id="MF_01173">
    <property type="entry name" value="AstC_aminotrans_3"/>
    <property type="match status" value="1"/>
</dbReference>
<dbReference type="InterPro" id="IPR017652">
    <property type="entry name" value="Ac/SucOrn_transaminase_bac"/>
</dbReference>
<dbReference type="InterPro" id="IPR004636">
    <property type="entry name" value="AcOrn/SuccOrn_fam"/>
</dbReference>
<dbReference type="InterPro" id="IPR005814">
    <property type="entry name" value="Aminotrans_3"/>
</dbReference>
<dbReference type="InterPro" id="IPR049704">
    <property type="entry name" value="Aminotrans_3_PPA_site"/>
</dbReference>
<dbReference type="InterPro" id="IPR050103">
    <property type="entry name" value="Class-III_PLP-dep_AT"/>
</dbReference>
<dbReference type="InterPro" id="IPR015424">
    <property type="entry name" value="PyrdxlP-dep_Trfase"/>
</dbReference>
<dbReference type="InterPro" id="IPR015421">
    <property type="entry name" value="PyrdxlP-dep_Trfase_major"/>
</dbReference>
<dbReference type="InterPro" id="IPR015422">
    <property type="entry name" value="PyrdxlP-dep_Trfase_small"/>
</dbReference>
<dbReference type="InterPro" id="IPR026330">
    <property type="entry name" value="SOAT"/>
</dbReference>
<dbReference type="NCBIfam" id="TIGR03246">
    <property type="entry name" value="arg_catab_astC"/>
    <property type="match status" value="1"/>
</dbReference>
<dbReference type="NCBIfam" id="TIGR00707">
    <property type="entry name" value="argD"/>
    <property type="match status" value="1"/>
</dbReference>
<dbReference type="NCBIfam" id="NF002325">
    <property type="entry name" value="PRK01278.1"/>
    <property type="match status" value="1"/>
</dbReference>
<dbReference type="NCBIfam" id="NF003468">
    <property type="entry name" value="PRK05093.1"/>
    <property type="match status" value="1"/>
</dbReference>
<dbReference type="NCBIfam" id="NF009047">
    <property type="entry name" value="PRK12381.1"/>
    <property type="match status" value="1"/>
</dbReference>
<dbReference type="PANTHER" id="PTHR11986">
    <property type="entry name" value="AMINOTRANSFERASE CLASS III"/>
    <property type="match status" value="1"/>
</dbReference>
<dbReference type="PANTHER" id="PTHR11986:SF113">
    <property type="entry name" value="SUCCINYLORNITHINE TRANSAMINASE"/>
    <property type="match status" value="1"/>
</dbReference>
<dbReference type="Pfam" id="PF00202">
    <property type="entry name" value="Aminotran_3"/>
    <property type="match status" value="1"/>
</dbReference>
<dbReference type="PIRSF" id="PIRSF000521">
    <property type="entry name" value="Transaminase_4ab_Lys_Orn"/>
    <property type="match status" value="1"/>
</dbReference>
<dbReference type="SUPFAM" id="SSF53383">
    <property type="entry name" value="PLP-dependent transferases"/>
    <property type="match status" value="1"/>
</dbReference>
<dbReference type="PROSITE" id="PS00600">
    <property type="entry name" value="AA_TRANSFER_CLASS_3"/>
    <property type="match status" value="1"/>
</dbReference>